<comment type="similarity">
    <text evidence="1">Belongs to the eukaryotic ribosomal protein eS21 family.</text>
</comment>
<feature type="chain" id="PRO_0000194753" description="Small ribosomal subunit protein eS21">
    <location>
        <begin position="1"/>
        <end position="82"/>
    </location>
</feature>
<protein>
    <recommendedName>
        <fullName evidence="1">Small ribosomal subunit protein eS21</fullName>
    </recommendedName>
    <alternativeName>
        <fullName>40S ribosomal protein S21</fullName>
    </alternativeName>
</protein>
<name>RS21_ORYSJ</name>
<evidence type="ECO:0000305" key="1"/>
<reference key="1">
    <citation type="journal article" date="1993" name="Biochim. Biophys. Acta">
        <title>The primary structure of two proteins from the small ribosomal subunit of rice.</title>
        <authorList>
            <person name="Nishi R."/>
            <person name="Hashimoto H."/>
            <person name="Uchimiya H."/>
            <person name="Kato A."/>
        </authorList>
    </citation>
    <scope>NUCLEOTIDE SEQUENCE [MRNA]</scope>
</reference>
<reference key="2">
    <citation type="journal article" date="2005" name="Genome Res.">
        <title>Sequence, annotation, and analysis of synteny between rice chromosome 3 and diverged grass species.</title>
        <authorList>
            <consortium name="The rice chromosome 3 sequencing consortium"/>
            <person name="Buell C.R."/>
            <person name="Yuan Q."/>
            <person name="Ouyang S."/>
            <person name="Liu J."/>
            <person name="Zhu W."/>
            <person name="Wang A."/>
            <person name="Maiti R."/>
            <person name="Haas B."/>
            <person name="Wortman J."/>
            <person name="Pertea M."/>
            <person name="Jones K.M."/>
            <person name="Kim M."/>
            <person name="Overton L."/>
            <person name="Tsitrin T."/>
            <person name="Fadrosh D."/>
            <person name="Bera J."/>
            <person name="Weaver B."/>
            <person name="Jin S."/>
            <person name="Johri S."/>
            <person name="Reardon M."/>
            <person name="Webb K."/>
            <person name="Hill J."/>
            <person name="Moffat K."/>
            <person name="Tallon L."/>
            <person name="Van Aken S."/>
            <person name="Lewis M."/>
            <person name="Utterback T."/>
            <person name="Feldblyum T."/>
            <person name="Zismann V."/>
            <person name="Iobst S."/>
            <person name="Hsiao J."/>
            <person name="de Vazeille A.R."/>
            <person name="Salzberg S.L."/>
            <person name="White O."/>
            <person name="Fraser C.M."/>
            <person name="Yu Y."/>
            <person name="Kim H."/>
            <person name="Rambo T."/>
            <person name="Currie J."/>
            <person name="Collura K."/>
            <person name="Kernodle-Thompson S."/>
            <person name="Wei F."/>
            <person name="Kudrna K."/>
            <person name="Ammiraju J.S.S."/>
            <person name="Luo M."/>
            <person name="Goicoechea J.L."/>
            <person name="Wing R.A."/>
            <person name="Henry D."/>
            <person name="Oates R."/>
            <person name="Palmer M."/>
            <person name="Pries G."/>
            <person name="Saski C."/>
            <person name="Simmons J."/>
            <person name="Soderlund C."/>
            <person name="Nelson W."/>
            <person name="de la Bastide M."/>
            <person name="Spiegel L."/>
            <person name="Nascimento L."/>
            <person name="Huang E."/>
            <person name="Preston R."/>
            <person name="Zutavern T."/>
            <person name="Palmer L."/>
            <person name="O'Shaughnessy A."/>
            <person name="Dike S."/>
            <person name="McCombie W.R."/>
            <person name="Minx P."/>
            <person name="Cordum H."/>
            <person name="Wilson R."/>
            <person name="Jin W."/>
            <person name="Lee H.R."/>
            <person name="Jiang J."/>
            <person name="Jackson S."/>
        </authorList>
    </citation>
    <scope>NUCLEOTIDE SEQUENCE [LARGE SCALE GENOMIC DNA]</scope>
    <source>
        <strain>cv. Nipponbare</strain>
    </source>
</reference>
<reference key="3">
    <citation type="journal article" date="2005" name="Nature">
        <title>The map-based sequence of the rice genome.</title>
        <authorList>
            <consortium name="International rice genome sequencing project (IRGSP)"/>
        </authorList>
    </citation>
    <scope>NUCLEOTIDE SEQUENCE [LARGE SCALE GENOMIC DNA]</scope>
    <source>
        <strain>cv. Nipponbare</strain>
    </source>
</reference>
<reference key="4">
    <citation type="journal article" date="2008" name="Nucleic Acids Res.">
        <title>The rice annotation project database (RAP-DB): 2008 update.</title>
        <authorList>
            <consortium name="The rice annotation project (RAP)"/>
        </authorList>
    </citation>
    <scope>GENOME REANNOTATION</scope>
    <source>
        <strain>cv. Nipponbare</strain>
    </source>
</reference>
<reference key="5">
    <citation type="journal article" date="2013" name="Rice">
        <title>Improvement of the Oryza sativa Nipponbare reference genome using next generation sequence and optical map data.</title>
        <authorList>
            <person name="Kawahara Y."/>
            <person name="de la Bastide M."/>
            <person name="Hamilton J.P."/>
            <person name="Kanamori H."/>
            <person name="McCombie W.R."/>
            <person name="Ouyang S."/>
            <person name="Schwartz D.C."/>
            <person name="Tanaka T."/>
            <person name="Wu J."/>
            <person name="Zhou S."/>
            <person name="Childs K.L."/>
            <person name="Davidson R.M."/>
            <person name="Lin H."/>
            <person name="Quesada-Ocampo L."/>
            <person name="Vaillancourt B."/>
            <person name="Sakai H."/>
            <person name="Lee S.S."/>
            <person name="Kim J."/>
            <person name="Numa H."/>
            <person name="Itoh T."/>
            <person name="Buell C.R."/>
            <person name="Matsumoto T."/>
        </authorList>
    </citation>
    <scope>GENOME REANNOTATION</scope>
    <source>
        <strain>cv. Nipponbare</strain>
    </source>
</reference>
<keyword id="KW-1185">Reference proteome</keyword>
<keyword id="KW-0687">Ribonucleoprotein</keyword>
<keyword id="KW-0689">Ribosomal protein</keyword>
<organism>
    <name type="scientific">Oryza sativa subsp. japonica</name>
    <name type="common">Rice</name>
    <dbReference type="NCBI Taxonomy" id="39947"/>
    <lineage>
        <taxon>Eukaryota</taxon>
        <taxon>Viridiplantae</taxon>
        <taxon>Streptophyta</taxon>
        <taxon>Embryophyta</taxon>
        <taxon>Tracheophyta</taxon>
        <taxon>Spermatophyta</taxon>
        <taxon>Magnoliopsida</taxon>
        <taxon>Liliopsida</taxon>
        <taxon>Poales</taxon>
        <taxon>Poaceae</taxon>
        <taxon>BOP clade</taxon>
        <taxon>Oryzoideae</taxon>
        <taxon>Oryzeae</taxon>
        <taxon>Oryzinae</taxon>
        <taxon>Oryza</taxon>
        <taxon>Oryza sativa</taxon>
    </lineage>
</organism>
<dbReference type="EMBL" id="D12633">
    <property type="protein sequence ID" value="BAA02158.1"/>
    <property type="molecule type" value="mRNA"/>
</dbReference>
<dbReference type="EMBL" id="AC148339">
    <property type="status" value="NOT_ANNOTATED_CDS"/>
    <property type="molecule type" value="Genomic_DNA"/>
</dbReference>
<dbReference type="EMBL" id="DP000009">
    <property type="protein sequence ID" value="ABF95896.1"/>
    <property type="molecule type" value="Genomic_DNA"/>
</dbReference>
<dbReference type="EMBL" id="AP008209">
    <property type="protein sequence ID" value="BAF12002.1"/>
    <property type="molecule type" value="Genomic_DNA"/>
</dbReference>
<dbReference type="EMBL" id="AP014959">
    <property type="protein sequence ID" value="BAS84157.1"/>
    <property type="molecule type" value="Genomic_DNA"/>
</dbReference>
<dbReference type="PIR" id="S38357">
    <property type="entry name" value="S38357"/>
</dbReference>
<dbReference type="RefSeq" id="XP_015632039.1">
    <property type="nucleotide sequence ID" value="XM_015776553.1"/>
</dbReference>
<dbReference type="SMR" id="P35687"/>
<dbReference type="FunCoup" id="P35687">
    <property type="interactions" value="2226"/>
</dbReference>
<dbReference type="STRING" id="39947.P35687"/>
<dbReference type="PaxDb" id="39947-P35687"/>
<dbReference type="EnsemblPlants" id="Os03t0345200-01">
    <property type="protein sequence ID" value="Os03t0345200-01"/>
    <property type="gene ID" value="Os03g0345200"/>
</dbReference>
<dbReference type="Gramene" id="Os03t0345200-01">
    <property type="protein sequence ID" value="Os03t0345200-01"/>
    <property type="gene ID" value="Os03g0345200"/>
</dbReference>
<dbReference type="KEGG" id="dosa:Os03g0345200"/>
<dbReference type="eggNOG" id="KOG3486">
    <property type="taxonomic scope" value="Eukaryota"/>
</dbReference>
<dbReference type="HOGENOM" id="CLU_167122_1_0_1"/>
<dbReference type="InParanoid" id="P35687"/>
<dbReference type="OMA" id="GESDACM"/>
<dbReference type="OrthoDB" id="522601at2759"/>
<dbReference type="Proteomes" id="UP000000763">
    <property type="component" value="Chromosome 3"/>
</dbReference>
<dbReference type="Proteomes" id="UP000059680">
    <property type="component" value="Chromosome 3"/>
</dbReference>
<dbReference type="GO" id="GO:0022627">
    <property type="term" value="C:cytosolic small ribosomal subunit"/>
    <property type="evidence" value="ECO:0000318"/>
    <property type="project" value="GO_Central"/>
</dbReference>
<dbReference type="GO" id="GO:0003735">
    <property type="term" value="F:structural constituent of ribosome"/>
    <property type="evidence" value="ECO:0000318"/>
    <property type="project" value="GO_Central"/>
</dbReference>
<dbReference type="GO" id="GO:0000447">
    <property type="term" value="P:endonucleolytic cleavage in ITS1 to separate SSU-rRNA from 5.8S rRNA and LSU-rRNA from tricistronic rRNA transcript (SSU-rRNA, 5.8S rRNA, LSU-rRNA)"/>
    <property type="evidence" value="ECO:0000318"/>
    <property type="project" value="GO_Central"/>
</dbReference>
<dbReference type="GO" id="GO:0000461">
    <property type="term" value="P:endonucleolytic cleavage to generate mature 3'-end of SSU-rRNA from (SSU-rRNA, 5.8S rRNA, LSU-rRNA)"/>
    <property type="evidence" value="ECO:0000318"/>
    <property type="project" value="GO_Central"/>
</dbReference>
<dbReference type="GO" id="GO:0006412">
    <property type="term" value="P:translation"/>
    <property type="evidence" value="ECO:0007669"/>
    <property type="project" value="InterPro"/>
</dbReference>
<dbReference type="FunFam" id="3.30.1230.20:FF:000002">
    <property type="entry name" value="40S ribosomal protein S21"/>
    <property type="match status" value="1"/>
</dbReference>
<dbReference type="Gene3D" id="3.30.1230.20">
    <property type="match status" value="1"/>
</dbReference>
<dbReference type="InterPro" id="IPR001931">
    <property type="entry name" value="Ribosomal_eS21"/>
</dbReference>
<dbReference type="InterPro" id="IPR018279">
    <property type="entry name" value="Ribosomal_eS21_CS"/>
</dbReference>
<dbReference type="InterPro" id="IPR038579">
    <property type="entry name" value="Ribosomal_eS21_sf"/>
</dbReference>
<dbReference type="PANTHER" id="PTHR10442">
    <property type="entry name" value="40S RIBOSOMAL PROTEIN S21"/>
    <property type="match status" value="1"/>
</dbReference>
<dbReference type="Pfam" id="PF01249">
    <property type="entry name" value="Ribosomal_S21e"/>
    <property type="match status" value="1"/>
</dbReference>
<dbReference type="PIRSF" id="PIRSF002148">
    <property type="entry name" value="Ribosomal_S21e"/>
    <property type="match status" value="1"/>
</dbReference>
<dbReference type="PROSITE" id="PS00996">
    <property type="entry name" value="RIBOSOMAL_S21E"/>
    <property type="match status" value="1"/>
</dbReference>
<proteinExistence type="inferred from homology"/>
<gene>
    <name type="primary">RPS21</name>
    <name type="ordered locus">Os03g0345200</name>
    <name type="ordered locus">LOC_Os03g22460</name>
</gene>
<sequence>MQNEEGQMVDLYVPRKCSATNRIITAKDHASVQINIGHVDENGLYDGRFTTFALSGFIRAQGDADSALDRLWQKRKAEVKQQ</sequence>
<accession>P35687</accession>
<accession>Q10LK3</accession>